<protein>
    <recommendedName>
        <fullName evidence="4">Galactitol 2-dehydrogenase</fullName>
        <shortName evidence="4">GDH</shortName>
        <ecNumber evidence="3">1.1.1.16</ecNumber>
    </recommendedName>
    <alternativeName>
        <fullName evidence="4">RlGDH</fullName>
    </alternativeName>
</protein>
<accession>Q1MLL4</accession>
<keyword id="KW-0119">Carbohydrate metabolism</keyword>
<keyword id="KW-0520">NAD</keyword>
<keyword id="KW-0560">Oxidoreductase</keyword>
<dbReference type="EC" id="1.1.1.16" evidence="3"/>
<dbReference type="EMBL" id="AM236080">
    <property type="protein sequence ID" value="CAK06139.1"/>
    <property type="molecule type" value="Genomic_DNA"/>
</dbReference>
<dbReference type="RefSeq" id="WP_011650422.1">
    <property type="nucleotide sequence ID" value="NC_008380.1"/>
</dbReference>
<dbReference type="SMR" id="Q1MLL4"/>
<dbReference type="EnsemblBacteria" id="CAK06139">
    <property type="protein sequence ID" value="CAK06139"/>
    <property type="gene ID" value="RL0645"/>
</dbReference>
<dbReference type="KEGG" id="rle:RL0645"/>
<dbReference type="eggNOG" id="COG1028">
    <property type="taxonomic scope" value="Bacteria"/>
</dbReference>
<dbReference type="HOGENOM" id="CLU_010194_1_1_5"/>
<dbReference type="BRENDA" id="1.1.1.16">
    <property type="organism ID" value="5343"/>
</dbReference>
<dbReference type="Proteomes" id="UP000006575">
    <property type="component" value="Chromosome"/>
</dbReference>
<dbReference type="GO" id="GO:0047713">
    <property type="term" value="F:galactitol 2-dehydrogenase activity"/>
    <property type="evidence" value="ECO:0000314"/>
    <property type="project" value="UniProtKB"/>
</dbReference>
<dbReference type="GO" id="GO:0019402">
    <property type="term" value="P:galactitol metabolic process"/>
    <property type="evidence" value="ECO:0000314"/>
    <property type="project" value="UniProtKB"/>
</dbReference>
<dbReference type="FunFam" id="3.40.50.720:FF:000240">
    <property type="entry name" value="SDR family oxidoreductase"/>
    <property type="match status" value="1"/>
</dbReference>
<dbReference type="Gene3D" id="3.40.50.720">
    <property type="entry name" value="NAD(P)-binding Rossmann-like Domain"/>
    <property type="match status" value="1"/>
</dbReference>
<dbReference type="InterPro" id="IPR036291">
    <property type="entry name" value="NAD(P)-bd_dom_sf"/>
</dbReference>
<dbReference type="InterPro" id="IPR020904">
    <property type="entry name" value="Sc_DH/Rdtase_CS"/>
</dbReference>
<dbReference type="InterPro" id="IPR002347">
    <property type="entry name" value="SDR_fam"/>
</dbReference>
<dbReference type="PANTHER" id="PTHR42760:SF115">
    <property type="entry name" value="3-OXOACYL-[ACYL-CARRIER-PROTEIN] REDUCTASE FABG"/>
    <property type="match status" value="1"/>
</dbReference>
<dbReference type="PANTHER" id="PTHR42760">
    <property type="entry name" value="SHORT-CHAIN DEHYDROGENASES/REDUCTASES FAMILY MEMBER"/>
    <property type="match status" value="1"/>
</dbReference>
<dbReference type="Pfam" id="PF13561">
    <property type="entry name" value="adh_short_C2"/>
    <property type="match status" value="1"/>
</dbReference>
<dbReference type="PRINTS" id="PR00081">
    <property type="entry name" value="GDHRDH"/>
</dbReference>
<dbReference type="PRINTS" id="PR00080">
    <property type="entry name" value="SDRFAMILY"/>
</dbReference>
<dbReference type="SUPFAM" id="SSF51735">
    <property type="entry name" value="NAD(P)-binding Rossmann-fold domains"/>
    <property type="match status" value="1"/>
</dbReference>
<dbReference type="PROSITE" id="PS00061">
    <property type="entry name" value="ADH_SHORT"/>
    <property type="match status" value="1"/>
</dbReference>
<evidence type="ECO:0000250" key="1">
    <source>
        <dbReference type="UniProtKB" id="Q9ZNN8"/>
    </source>
</evidence>
<evidence type="ECO:0000255" key="2">
    <source>
        <dbReference type="PROSITE-ProRule" id="PRU10001"/>
    </source>
</evidence>
<evidence type="ECO:0000269" key="3">
    <source>
    </source>
</evidence>
<evidence type="ECO:0000303" key="4">
    <source>
    </source>
</evidence>
<evidence type="ECO:0000305" key="5"/>
<evidence type="ECO:0000312" key="6">
    <source>
        <dbReference type="EMBL" id="CAK06139.1"/>
    </source>
</evidence>
<feature type="chain" id="PRO_0000446638" description="Galactitol 2-dehydrogenase">
    <location>
        <begin position="1"/>
        <end position="257"/>
    </location>
</feature>
<feature type="active site" description="Proton acceptor" evidence="2">
    <location>
        <position position="162"/>
    </location>
</feature>
<feature type="binding site" evidence="1">
    <location>
        <begin position="21"/>
        <end position="23"/>
    </location>
    <ligand>
        <name>NAD(+)</name>
        <dbReference type="ChEBI" id="CHEBI:57540"/>
    </ligand>
</feature>
<feature type="binding site" evidence="1">
    <location>
        <begin position="67"/>
        <end position="68"/>
    </location>
    <ligand>
        <name>NAD(+)</name>
        <dbReference type="ChEBI" id="CHEBI:57540"/>
    </ligand>
</feature>
<feature type="binding site" evidence="1">
    <location>
        <position position="94"/>
    </location>
    <ligand>
        <name>NAD(+)</name>
        <dbReference type="ChEBI" id="CHEBI:57540"/>
    </ligand>
</feature>
<feature type="binding site" evidence="1">
    <location>
        <position position="162"/>
    </location>
    <ligand>
        <name>NAD(+)</name>
        <dbReference type="ChEBI" id="CHEBI:57540"/>
    </ligand>
</feature>
<feature type="binding site" evidence="1">
    <location>
        <position position="166"/>
    </location>
    <ligand>
        <name>NAD(+)</name>
        <dbReference type="ChEBI" id="CHEBI:57540"/>
    </ligand>
</feature>
<proteinExistence type="evidence at protein level"/>
<reference key="1">
    <citation type="journal article" date="2006" name="Genome Biol.">
        <title>The genome of Rhizobium leguminosarum has recognizable core and accessory components.</title>
        <authorList>
            <person name="Young J.P.W."/>
            <person name="Crossman L.C."/>
            <person name="Johnston A.W.B."/>
            <person name="Thomson N.R."/>
            <person name="Ghazoui Z.F."/>
            <person name="Hull K.H."/>
            <person name="Wexler M."/>
            <person name="Curson A.R.J."/>
            <person name="Todd J.D."/>
            <person name="Poole P.S."/>
            <person name="Mauchline T.H."/>
            <person name="East A.K."/>
            <person name="Quail M.A."/>
            <person name="Churcher C."/>
            <person name="Arrowsmith C."/>
            <person name="Cherevach I."/>
            <person name="Chillingworth T."/>
            <person name="Clarke K."/>
            <person name="Cronin A."/>
            <person name="Davis P."/>
            <person name="Fraser A."/>
            <person name="Hance Z."/>
            <person name="Hauser H."/>
            <person name="Jagels K."/>
            <person name="Moule S."/>
            <person name="Mungall K."/>
            <person name="Norbertczak H."/>
            <person name="Rabbinowitsch E."/>
            <person name="Sanders M."/>
            <person name="Simmonds M."/>
            <person name="Whitehead S."/>
            <person name="Parkhill J."/>
        </authorList>
    </citation>
    <scope>NUCLEOTIDE SEQUENCE [LARGE SCALE GENOMIC DNA]</scope>
    <source>
        <strain>DSM 114642 / LMG 32736 / 3841</strain>
    </source>
</reference>
<reference key="2">
    <citation type="journal article" date="2014" name="Enzyme Microb. Technol.">
        <title>Cloning and characterization of a galactitol 2-dehydrogenase from Rhizobium legumenosarum and its application in D-tagatose production.</title>
        <authorList>
            <person name="Jagtap S.S."/>
            <person name="Singh R."/>
            <person name="Kang Y.C."/>
            <person name="Zhao H."/>
            <person name="Lee J.K."/>
        </authorList>
    </citation>
    <scope>FUNCTION</scope>
    <scope>CATALYTIC ACTIVITY</scope>
    <scope>COFACTOR</scope>
    <scope>BIOPHYSICOCHEMICAL PROPERTIES</scope>
    <scope>SUBUNIT</scope>
    <source>
        <strain>DSM 114642 / LMG 32736 / 3841</strain>
    </source>
</reference>
<gene>
    <name evidence="4" type="primary">gdh</name>
    <name evidence="6" type="ordered locus">RL0645</name>
</gene>
<sequence length="257" mass="27289">MSYQQKFRLDGERAVVTGGGRAIGLCCTEALAEAGAAVVVIERSEADAEQALALRNRGYDVEVRVGDVTDAARMDAIATELADGGRPATILVNNAGIGQSGIPAQDLTDADWLRMMDVNLNGVFWCSRAFGRSMISMKRGAIVNLGSMSGTICNRPQPQTAYNVSKAAVHHLTRSLAAEWAHHGIRVNAVAPTYIETPMVVAVEANRERIPLWLADTPMARMGTPEEVASAVLFLASGAASLMTGAIVNVDAGFTCW</sequence>
<organism>
    <name type="scientific">Rhizobium johnstonii (strain DSM 114642 / LMG 32736 / 3841)</name>
    <name type="common">Rhizobium leguminosarum bv. viciae</name>
    <dbReference type="NCBI Taxonomy" id="216596"/>
    <lineage>
        <taxon>Bacteria</taxon>
        <taxon>Pseudomonadati</taxon>
        <taxon>Pseudomonadota</taxon>
        <taxon>Alphaproteobacteria</taxon>
        <taxon>Hyphomicrobiales</taxon>
        <taxon>Rhizobiaceae</taxon>
        <taxon>Rhizobium/Agrobacterium group</taxon>
        <taxon>Rhizobium</taxon>
        <taxon>Rhizobium johnstonii</taxon>
    </lineage>
</organism>
<comment type="function">
    <text evidence="3">Catalyzes the oxidation of galactitol to D-tagatose. Also catalyzes the oxidation of a wide range of substrates, including polyvalent aliphatic alcohols and polyols, to the corresponding ketones and ketoses. Galactitol is the preferred substrate.</text>
</comment>
<comment type="catalytic activity">
    <reaction evidence="3">
        <text>galactitol + NAD(+) = keto-D-tagatose + NADH + H(+)</text>
        <dbReference type="Rhea" id="RHEA:20685"/>
        <dbReference type="ChEBI" id="CHEBI:15378"/>
        <dbReference type="ChEBI" id="CHEBI:16813"/>
        <dbReference type="ChEBI" id="CHEBI:47693"/>
        <dbReference type="ChEBI" id="CHEBI:57540"/>
        <dbReference type="ChEBI" id="CHEBI:57945"/>
        <dbReference type="EC" id="1.1.1.16"/>
    </reaction>
</comment>
<comment type="cofactor">
    <cofactor evidence="3">
        <name>Mg(2+)</name>
        <dbReference type="ChEBI" id="CHEBI:18420"/>
    </cofactor>
    <text evidence="3">Binds one Mg(2+) per dimer. Can also use other divalent cations.</text>
</comment>
<comment type="biophysicochemical properties">
    <kinetics>
        <KM evidence="3">8.8 mM for galactitol</KM>
        <KM evidence="3">1 mM for NAD(+)</KM>
        <text evidence="3">kcat is 835 min(-1).</text>
    </kinetics>
    <phDependence>
        <text evidence="3">Optimum pH is 9.5.</text>
    </phDependence>
    <temperatureDependence>
        <text evidence="3">Optimum temperature is 35 degrees Celsius.</text>
    </temperatureDependence>
</comment>
<comment type="subunit">
    <text evidence="3">Homotetramer.</text>
</comment>
<comment type="similarity">
    <text evidence="5">Belongs to the short-chain dehydrogenases/reductases (SDR) family.</text>
</comment>
<name>GDH_RHIJ3</name>